<accession>Q0AA96</accession>
<proteinExistence type="inferred from homology"/>
<name>RL19_ALKEH</name>
<organism>
    <name type="scientific">Alkalilimnicola ehrlichii (strain ATCC BAA-1101 / DSM 17681 / MLHE-1)</name>
    <dbReference type="NCBI Taxonomy" id="187272"/>
    <lineage>
        <taxon>Bacteria</taxon>
        <taxon>Pseudomonadati</taxon>
        <taxon>Pseudomonadota</taxon>
        <taxon>Gammaproteobacteria</taxon>
        <taxon>Chromatiales</taxon>
        <taxon>Ectothiorhodospiraceae</taxon>
        <taxon>Alkalilimnicola</taxon>
    </lineage>
</organism>
<dbReference type="EMBL" id="CP000453">
    <property type="protein sequence ID" value="ABI56241.1"/>
    <property type="molecule type" value="Genomic_DNA"/>
</dbReference>
<dbReference type="RefSeq" id="WP_011628636.1">
    <property type="nucleotide sequence ID" value="NC_008340.1"/>
</dbReference>
<dbReference type="SMR" id="Q0AA96"/>
<dbReference type="KEGG" id="aeh:Mlg_0887"/>
<dbReference type="eggNOG" id="COG0335">
    <property type="taxonomic scope" value="Bacteria"/>
</dbReference>
<dbReference type="HOGENOM" id="CLU_103507_1_0_6"/>
<dbReference type="OrthoDB" id="9803541at2"/>
<dbReference type="Proteomes" id="UP000001962">
    <property type="component" value="Chromosome"/>
</dbReference>
<dbReference type="GO" id="GO:0022625">
    <property type="term" value="C:cytosolic large ribosomal subunit"/>
    <property type="evidence" value="ECO:0007669"/>
    <property type="project" value="TreeGrafter"/>
</dbReference>
<dbReference type="GO" id="GO:0003735">
    <property type="term" value="F:structural constituent of ribosome"/>
    <property type="evidence" value="ECO:0007669"/>
    <property type="project" value="InterPro"/>
</dbReference>
<dbReference type="GO" id="GO:0006412">
    <property type="term" value="P:translation"/>
    <property type="evidence" value="ECO:0007669"/>
    <property type="project" value="UniProtKB-UniRule"/>
</dbReference>
<dbReference type="FunFam" id="2.30.30.790:FF:000001">
    <property type="entry name" value="50S ribosomal protein L19"/>
    <property type="match status" value="1"/>
</dbReference>
<dbReference type="Gene3D" id="2.30.30.790">
    <property type="match status" value="1"/>
</dbReference>
<dbReference type="HAMAP" id="MF_00402">
    <property type="entry name" value="Ribosomal_bL19"/>
    <property type="match status" value="1"/>
</dbReference>
<dbReference type="InterPro" id="IPR001857">
    <property type="entry name" value="Ribosomal_bL19"/>
</dbReference>
<dbReference type="InterPro" id="IPR018257">
    <property type="entry name" value="Ribosomal_bL19_CS"/>
</dbReference>
<dbReference type="InterPro" id="IPR038657">
    <property type="entry name" value="Ribosomal_bL19_sf"/>
</dbReference>
<dbReference type="InterPro" id="IPR008991">
    <property type="entry name" value="Translation_prot_SH3-like_sf"/>
</dbReference>
<dbReference type="NCBIfam" id="TIGR01024">
    <property type="entry name" value="rplS_bact"/>
    <property type="match status" value="1"/>
</dbReference>
<dbReference type="PANTHER" id="PTHR15680:SF9">
    <property type="entry name" value="LARGE RIBOSOMAL SUBUNIT PROTEIN BL19M"/>
    <property type="match status" value="1"/>
</dbReference>
<dbReference type="PANTHER" id="PTHR15680">
    <property type="entry name" value="RIBOSOMAL PROTEIN L19"/>
    <property type="match status" value="1"/>
</dbReference>
<dbReference type="Pfam" id="PF01245">
    <property type="entry name" value="Ribosomal_L19"/>
    <property type="match status" value="1"/>
</dbReference>
<dbReference type="PIRSF" id="PIRSF002191">
    <property type="entry name" value="Ribosomal_L19"/>
    <property type="match status" value="1"/>
</dbReference>
<dbReference type="PRINTS" id="PR00061">
    <property type="entry name" value="RIBOSOMALL19"/>
</dbReference>
<dbReference type="SUPFAM" id="SSF50104">
    <property type="entry name" value="Translation proteins SH3-like domain"/>
    <property type="match status" value="1"/>
</dbReference>
<dbReference type="PROSITE" id="PS01015">
    <property type="entry name" value="RIBOSOMAL_L19"/>
    <property type="match status" value="1"/>
</dbReference>
<feature type="chain" id="PRO_1000072239" description="Large ribosomal subunit protein bL19">
    <location>
        <begin position="1"/>
        <end position="117"/>
    </location>
</feature>
<comment type="function">
    <text evidence="1">This protein is located at the 30S-50S ribosomal subunit interface and may play a role in the structure and function of the aminoacyl-tRNA binding site.</text>
</comment>
<comment type="similarity">
    <text evidence="1">Belongs to the bacterial ribosomal protein bL19 family.</text>
</comment>
<evidence type="ECO:0000255" key="1">
    <source>
        <dbReference type="HAMAP-Rule" id="MF_00402"/>
    </source>
</evidence>
<evidence type="ECO:0000305" key="2"/>
<gene>
    <name evidence="1" type="primary">rplS</name>
    <name type="ordered locus">Mlg_0887</name>
</gene>
<sequence length="117" mass="13387">MNIIEQLDKEQMAAREAKIPEFGPGDTVTVQVWVKEGGRERLQAFEGVVIAKRNRGINSAFTVRKVSHGEGVERVFQTYSPIIESVKVKRRGDVRRAKLYYLRERSGKSARIKEKVK</sequence>
<protein>
    <recommendedName>
        <fullName evidence="1">Large ribosomal subunit protein bL19</fullName>
    </recommendedName>
    <alternativeName>
        <fullName evidence="2">50S ribosomal protein L19</fullName>
    </alternativeName>
</protein>
<keyword id="KW-1185">Reference proteome</keyword>
<keyword id="KW-0687">Ribonucleoprotein</keyword>
<keyword id="KW-0689">Ribosomal protein</keyword>
<reference key="1">
    <citation type="submission" date="2006-08" db="EMBL/GenBank/DDBJ databases">
        <title>Complete sequence of Alkalilimnicola ehrilichei MLHE-1.</title>
        <authorList>
            <person name="Copeland A."/>
            <person name="Lucas S."/>
            <person name="Lapidus A."/>
            <person name="Barry K."/>
            <person name="Detter J.C."/>
            <person name="Glavina del Rio T."/>
            <person name="Hammon N."/>
            <person name="Israni S."/>
            <person name="Dalin E."/>
            <person name="Tice H."/>
            <person name="Pitluck S."/>
            <person name="Sims D."/>
            <person name="Brettin T."/>
            <person name="Bruce D."/>
            <person name="Han C."/>
            <person name="Tapia R."/>
            <person name="Gilna P."/>
            <person name="Schmutz J."/>
            <person name="Larimer F."/>
            <person name="Land M."/>
            <person name="Hauser L."/>
            <person name="Kyrpides N."/>
            <person name="Mikhailova N."/>
            <person name="Oremland R.S."/>
            <person name="Hoeft S.E."/>
            <person name="Switzer-Blum J."/>
            <person name="Kulp T."/>
            <person name="King G."/>
            <person name="Tabita R."/>
            <person name="Witte B."/>
            <person name="Santini J.M."/>
            <person name="Basu P."/>
            <person name="Hollibaugh J.T."/>
            <person name="Xie G."/>
            <person name="Stolz J.F."/>
            <person name="Richardson P."/>
        </authorList>
    </citation>
    <scope>NUCLEOTIDE SEQUENCE [LARGE SCALE GENOMIC DNA]</scope>
    <source>
        <strain>ATCC BAA-1101 / DSM 17681 / MLHE-1</strain>
    </source>
</reference>